<reference key="1">
    <citation type="journal article" date="2007" name="J. Bacteriol.">
        <title>Genome of the opportunistic pathogen Streptococcus sanguinis.</title>
        <authorList>
            <person name="Xu P."/>
            <person name="Alves J.M."/>
            <person name="Kitten T."/>
            <person name="Brown A."/>
            <person name="Chen Z."/>
            <person name="Ozaki L.S."/>
            <person name="Manque P."/>
            <person name="Ge X."/>
            <person name="Serrano M.G."/>
            <person name="Puiu D."/>
            <person name="Hendricks S."/>
            <person name="Wang Y."/>
            <person name="Chaplin M.D."/>
            <person name="Akan D."/>
            <person name="Paik S."/>
            <person name="Peterson D.L."/>
            <person name="Macrina F.L."/>
            <person name="Buck G.A."/>
        </authorList>
    </citation>
    <scope>NUCLEOTIDE SEQUENCE [LARGE SCALE GENOMIC DNA]</scope>
    <source>
        <strain>SK36</strain>
    </source>
</reference>
<dbReference type="EMBL" id="CP000387">
    <property type="protein sequence ID" value="ABN44251.1"/>
    <property type="molecule type" value="Genomic_DNA"/>
</dbReference>
<dbReference type="RefSeq" id="WP_000048054.1">
    <property type="nucleotide sequence ID" value="NZ_CAXTYR010000004.1"/>
</dbReference>
<dbReference type="RefSeq" id="YP_001034801.1">
    <property type="nucleotide sequence ID" value="NC_009009.1"/>
</dbReference>
<dbReference type="SMR" id="A3CM46"/>
<dbReference type="STRING" id="388919.SSA_0820"/>
<dbReference type="GeneID" id="93963143"/>
<dbReference type="KEGG" id="ssa:SSA_0820"/>
<dbReference type="PATRIC" id="fig|388919.9.peg.786"/>
<dbReference type="eggNOG" id="COG0828">
    <property type="taxonomic scope" value="Bacteria"/>
</dbReference>
<dbReference type="HOGENOM" id="CLU_159258_3_2_9"/>
<dbReference type="OrthoDB" id="9799244at2"/>
<dbReference type="PRO" id="PR:A3CM46"/>
<dbReference type="Proteomes" id="UP000002148">
    <property type="component" value="Chromosome"/>
</dbReference>
<dbReference type="GO" id="GO:1990904">
    <property type="term" value="C:ribonucleoprotein complex"/>
    <property type="evidence" value="ECO:0007669"/>
    <property type="project" value="UniProtKB-KW"/>
</dbReference>
<dbReference type="GO" id="GO:0005840">
    <property type="term" value="C:ribosome"/>
    <property type="evidence" value="ECO:0007669"/>
    <property type="project" value="UniProtKB-KW"/>
</dbReference>
<dbReference type="GO" id="GO:0003735">
    <property type="term" value="F:structural constituent of ribosome"/>
    <property type="evidence" value="ECO:0007669"/>
    <property type="project" value="InterPro"/>
</dbReference>
<dbReference type="GO" id="GO:0006412">
    <property type="term" value="P:translation"/>
    <property type="evidence" value="ECO:0007669"/>
    <property type="project" value="UniProtKB-UniRule"/>
</dbReference>
<dbReference type="Gene3D" id="1.20.5.1150">
    <property type="entry name" value="Ribosomal protein S8"/>
    <property type="match status" value="1"/>
</dbReference>
<dbReference type="HAMAP" id="MF_00358">
    <property type="entry name" value="Ribosomal_bS21"/>
    <property type="match status" value="1"/>
</dbReference>
<dbReference type="InterPro" id="IPR001911">
    <property type="entry name" value="Ribosomal_bS21"/>
</dbReference>
<dbReference type="InterPro" id="IPR018278">
    <property type="entry name" value="Ribosomal_bS21_CS"/>
</dbReference>
<dbReference type="InterPro" id="IPR038380">
    <property type="entry name" value="Ribosomal_bS21_sf"/>
</dbReference>
<dbReference type="NCBIfam" id="TIGR00030">
    <property type="entry name" value="S21p"/>
    <property type="match status" value="1"/>
</dbReference>
<dbReference type="PANTHER" id="PTHR21109">
    <property type="entry name" value="MITOCHONDRIAL 28S RIBOSOMAL PROTEIN S21"/>
    <property type="match status" value="1"/>
</dbReference>
<dbReference type="PANTHER" id="PTHR21109:SF22">
    <property type="entry name" value="SMALL RIBOSOMAL SUBUNIT PROTEIN BS21"/>
    <property type="match status" value="1"/>
</dbReference>
<dbReference type="Pfam" id="PF01165">
    <property type="entry name" value="Ribosomal_S21"/>
    <property type="match status" value="1"/>
</dbReference>
<dbReference type="PRINTS" id="PR00976">
    <property type="entry name" value="RIBOSOMALS21"/>
</dbReference>
<dbReference type="PROSITE" id="PS01181">
    <property type="entry name" value="RIBOSOMAL_S21"/>
    <property type="match status" value="1"/>
</dbReference>
<evidence type="ECO:0000255" key="1">
    <source>
        <dbReference type="HAMAP-Rule" id="MF_00358"/>
    </source>
</evidence>
<evidence type="ECO:0000256" key="2">
    <source>
        <dbReference type="SAM" id="MobiDB-lite"/>
    </source>
</evidence>
<evidence type="ECO:0000305" key="3"/>
<gene>
    <name evidence="1" type="primary">rpsU</name>
    <name type="ordered locus">SSA_0820</name>
</gene>
<comment type="similarity">
    <text evidence="1">Belongs to the bacterial ribosomal protein bS21 family.</text>
</comment>
<organism>
    <name type="scientific">Streptococcus sanguinis (strain SK36)</name>
    <dbReference type="NCBI Taxonomy" id="388919"/>
    <lineage>
        <taxon>Bacteria</taxon>
        <taxon>Bacillati</taxon>
        <taxon>Bacillota</taxon>
        <taxon>Bacilli</taxon>
        <taxon>Lactobacillales</taxon>
        <taxon>Streptococcaceae</taxon>
        <taxon>Streptococcus</taxon>
    </lineage>
</organism>
<protein>
    <recommendedName>
        <fullName evidence="1">Small ribosomal subunit protein bS21</fullName>
    </recommendedName>
    <alternativeName>
        <fullName evidence="3">30S ribosomal protein S21</fullName>
    </alternativeName>
</protein>
<name>RS21_STRSV</name>
<sequence length="58" mass="6970">MSKTVVRKNESLDDALRRFKRAVTKAGTLQETRKREFYEKPSVKRKRKSEAARKRKKF</sequence>
<proteinExistence type="inferred from homology"/>
<accession>A3CM46</accession>
<feature type="chain" id="PRO_1000005179" description="Small ribosomal subunit protein bS21">
    <location>
        <begin position="1"/>
        <end position="58"/>
    </location>
</feature>
<feature type="region of interest" description="Disordered" evidence="2">
    <location>
        <begin position="37"/>
        <end position="58"/>
    </location>
</feature>
<feature type="compositionally biased region" description="Basic residues" evidence="2">
    <location>
        <begin position="43"/>
        <end position="58"/>
    </location>
</feature>
<keyword id="KW-1185">Reference proteome</keyword>
<keyword id="KW-0687">Ribonucleoprotein</keyword>
<keyword id="KW-0689">Ribosomal protein</keyword>